<dbReference type="EC" id="3.1.1.96" evidence="1"/>
<dbReference type="EMBL" id="CP001140">
    <property type="protein sequence ID" value="ACL11179.1"/>
    <property type="molecule type" value="Genomic_DNA"/>
</dbReference>
<dbReference type="RefSeq" id="WP_012608520.1">
    <property type="nucleotide sequence ID" value="NC_011766.1"/>
</dbReference>
<dbReference type="SMR" id="B8D4Z8"/>
<dbReference type="STRING" id="490899.DKAM_0853"/>
<dbReference type="GeneID" id="7170997"/>
<dbReference type="KEGG" id="dka:DKAM_0853"/>
<dbReference type="eggNOG" id="arCOG01616">
    <property type="taxonomic scope" value="Archaea"/>
</dbReference>
<dbReference type="HOGENOM" id="CLU_056464_1_0_2"/>
<dbReference type="Proteomes" id="UP000006903">
    <property type="component" value="Chromosome"/>
</dbReference>
<dbReference type="GO" id="GO:0051499">
    <property type="term" value="F:D-aminoacyl-tRNA deacylase activity"/>
    <property type="evidence" value="ECO:0007669"/>
    <property type="project" value="UniProtKB-UniRule"/>
</dbReference>
<dbReference type="GO" id="GO:0008270">
    <property type="term" value="F:zinc ion binding"/>
    <property type="evidence" value="ECO:0007669"/>
    <property type="project" value="UniProtKB-UniRule"/>
</dbReference>
<dbReference type="GO" id="GO:0019478">
    <property type="term" value="P:D-amino acid catabolic process"/>
    <property type="evidence" value="ECO:0007669"/>
    <property type="project" value="UniProtKB-UniRule"/>
</dbReference>
<dbReference type="Gene3D" id="3.40.50.10700">
    <property type="entry name" value="AF0625-like"/>
    <property type="match status" value="1"/>
</dbReference>
<dbReference type="Gene3D" id="3.40.630.50">
    <property type="entry name" value="AF0625-like"/>
    <property type="match status" value="1"/>
</dbReference>
<dbReference type="HAMAP" id="MF_00562">
    <property type="entry name" value="Deacylase_DtdA"/>
    <property type="match status" value="1"/>
</dbReference>
<dbReference type="InterPro" id="IPR018033">
    <property type="entry name" value="Deacylase_DtdA_archaea"/>
</dbReference>
<dbReference type="InterPro" id="IPR007508">
    <property type="entry name" value="DtdA"/>
</dbReference>
<dbReference type="NCBIfam" id="NF003072">
    <property type="entry name" value="PRK03995.1-4"/>
    <property type="match status" value="1"/>
</dbReference>
<dbReference type="PANTHER" id="PTHR34667">
    <property type="entry name" value="D-AMINOACYL-TRNA DEACYLASE"/>
    <property type="match status" value="1"/>
</dbReference>
<dbReference type="PANTHER" id="PTHR34667:SF1">
    <property type="entry name" value="D-AMINOACYL-TRNA DEACYLASE"/>
    <property type="match status" value="1"/>
</dbReference>
<dbReference type="Pfam" id="PF04414">
    <property type="entry name" value="tRNA_deacylase"/>
    <property type="match status" value="1"/>
</dbReference>
<dbReference type="PIRSF" id="PIRSF016210">
    <property type="entry name" value="UCP016210"/>
    <property type="match status" value="1"/>
</dbReference>
<dbReference type="SUPFAM" id="SSF142535">
    <property type="entry name" value="AF0625-like"/>
    <property type="match status" value="1"/>
</dbReference>
<evidence type="ECO:0000255" key="1">
    <source>
        <dbReference type="HAMAP-Rule" id="MF_00562"/>
    </source>
</evidence>
<sequence>MIGLVYSVEDPAGRGIASYIVEALKPHRTTNPYAMEYYEGDGFVLAGFNEDVIYFDFLEERLPMVSEYIVLSRHSSKAGVKSYTVHHTGNYGGEALSGGRPGELGIASPRTAWLLLRLLKTYRDAYSRNEYEVSYEATHHGPTSLSKPLVFIEIGSGLDEWRNRVNHAVVGDTVIGFLRGGIRDECIPVIGIGGGHYPRKHTELALAEPVCYGHIMAKYALEYMSRVVLDKMTERSVVKPVEVIVEKKGTRQEHRSLLEEYVSEKKLSLRYI</sequence>
<keyword id="KW-0378">Hydrolase</keyword>
<keyword id="KW-0479">Metal-binding</keyword>
<keyword id="KW-0862">Zinc</keyword>
<comment type="function">
    <text evidence="1">D-aminoacyl-tRNA deacylase with broad substrate specificity. By recycling D-aminoacyl-tRNA to D-amino acids and free tRNA molecules, this enzyme counteracts the toxicity associated with the formation of D-aminoacyl-tRNA entities in vivo.</text>
</comment>
<comment type="catalytic activity">
    <reaction evidence="1">
        <text>a D-aminoacyl-tRNA + H2O = a tRNA + a D-alpha-amino acid + H(+)</text>
        <dbReference type="Rhea" id="RHEA:13953"/>
        <dbReference type="Rhea" id="RHEA-COMP:10123"/>
        <dbReference type="Rhea" id="RHEA-COMP:10124"/>
        <dbReference type="ChEBI" id="CHEBI:15377"/>
        <dbReference type="ChEBI" id="CHEBI:15378"/>
        <dbReference type="ChEBI" id="CHEBI:59871"/>
        <dbReference type="ChEBI" id="CHEBI:78442"/>
        <dbReference type="ChEBI" id="CHEBI:79333"/>
        <dbReference type="EC" id="3.1.1.96"/>
    </reaction>
</comment>
<comment type="catalytic activity">
    <reaction evidence="1">
        <text>glycyl-tRNA(Ala) + H2O = tRNA(Ala) + glycine + H(+)</text>
        <dbReference type="Rhea" id="RHEA:53744"/>
        <dbReference type="Rhea" id="RHEA-COMP:9657"/>
        <dbReference type="Rhea" id="RHEA-COMP:13640"/>
        <dbReference type="ChEBI" id="CHEBI:15377"/>
        <dbReference type="ChEBI" id="CHEBI:15378"/>
        <dbReference type="ChEBI" id="CHEBI:57305"/>
        <dbReference type="ChEBI" id="CHEBI:78442"/>
        <dbReference type="ChEBI" id="CHEBI:78522"/>
        <dbReference type="EC" id="3.1.1.96"/>
    </reaction>
</comment>
<comment type="cofactor">
    <cofactor evidence="1">
        <name>Zn(2+)</name>
        <dbReference type="ChEBI" id="CHEBI:29105"/>
    </cofactor>
    <text evidence="1">Binds 2 Zn(2+) ions per subunit.</text>
</comment>
<comment type="subunit">
    <text evidence="1">Monomer.</text>
</comment>
<comment type="similarity">
    <text evidence="1">Belongs to the DtdA deacylase family.</text>
</comment>
<reference key="1">
    <citation type="journal article" date="2009" name="J. Bacteriol.">
        <title>Complete genome sequence of the anaerobic, protein-degrading hyperthermophilic crenarchaeon Desulfurococcus kamchatkensis.</title>
        <authorList>
            <person name="Ravin N.V."/>
            <person name="Mardanov A.V."/>
            <person name="Beletsky A.V."/>
            <person name="Kublanov I.V."/>
            <person name="Kolganova T.V."/>
            <person name="Lebedinsky A.V."/>
            <person name="Chernyh N.A."/>
            <person name="Bonch-Osmolovskaya E.A."/>
            <person name="Skryabin K.G."/>
        </authorList>
    </citation>
    <scope>NUCLEOTIDE SEQUENCE [LARGE SCALE GENOMIC DNA]</scope>
    <source>
        <strain>DSM 18924 / JCM 16383 / VKM B-2413 / 1221n</strain>
    </source>
</reference>
<proteinExistence type="inferred from homology"/>
<accession>B8D4Z8</accession>
<protein>
    <recommendedName>
        <fullName evidence="1">D-aminoacyl-tRNA deacylase</fullName>
        <ecNumber evidence="1">3.1.1.96</ecNumber>
    </recommendedName>
    <alternativeName>
        <fullName>D-tyrosyl-tRNA(Tyr) deacylase</fullName>
    </alternativeName>
</protein>
<name>DTDA_DESA1</name>
<feature type="chain" id="PRO_1000197952" description="D-aminoacyl-tRNA deacylase">
    <location>
        <begin position="1"/>
        <end position="272"/>
    </location>
</feature>
<gene>
    <name evidence="1" type="primary">dtdA</name>
    <name type="ordered locus">DKAM_0853</name>
</gene>
<organism>
    <name type="scientific">Desulfurococcus amylolyticus (strain DSM 18924 / JCM 16383 / VKM B-2413 / 1221n)</name>
    <name type="common">Desulfurococcus kamchatkensis</name>
    <dbReference type="NCBI Taxonomy" id="490899"/>
    <lineage>
        <taxon>Archaea</taxon>
        <taxon>Thermoproteota</taxon>
        <taxon>Thermoprotei</taxon>
        <taxon>Desulfurococcales</taxon>
        <taxon>Desulfurococcaceae</taxon>
        <taxon>Desulfurococcus</taxon>
    </lineage>
</organism>